<keyword id="KW-0378">Hydrolase</keyword>
<keyword id="KW-0507">mRNA processing</keyword>
<keyword id="KW-0539">Nucleus</keyword>
<keyword id="KW-0904">Protein phosphatase</keyword>
<keyword id="KW-1185">Reference proteome</keyword>
<comment type="function">
    <text evidence="1">Processively dephosphorylates Ser-5 of the heptad repeats YSPTSPS in the C-terminal domain of the largest RNA polymerase II subunit (RPB1).</text>
</comment>
<comment type="function">
    <text evidence="1">Component of the cleavage and polyadenylation factor (CPF) complex, which plays a key role in polyadenylation-dependent pre-mRNA 3'-end formation and cooperates with cleavage factors including the CFIA complex and NAB4/CFIB. SSU72 is required for 3'-end formation of snoRNAs (By similarity).</text>
</comment>
<comment type="catalytic activity">
    <reaction>
        <text>O-phospho-L-seryl-[protein] + H2O = L-seryl-[protein] + phosphate</text>
        <dbReference type="Rhea" id="RHEA:20629"/>
        <dbReference type="Rhea" id="RHEA-COMP:9863"/>
        <dbReference type="Rhea" id="RHEA-COMP:11604"/>
        <dbReference type="ChEBI" id="CHEBI:15377"/>
        <dbReference type="ChEBI" id="CHEBI:29999"/>
        <dbReference type="ChEBI" id="CHEBI:43474"/>
        <dbReference type="ChEBI" id="CHEBI:83421"/>
        <dbReference type="EC" id="3.1.3.16"/>
    </reaction>
</comment>
<comment type="catalytic activity">
    <reaction>
        <text>O-phospho-L-threonyl-[protein] + H2O = L-threonyl-[protein] + phosphate</text>
        <dbReference type="Rhea" id="RHEA:47004"/>
        <dbReference type="Rhea" id="RHEA-COMP:11060"/>
        <dbReference type="Rhea" id="RHEA-COMP:11605"/>
        <dbReference type="ChEBI" id="CHEBI:15377"/>
        <dbReference type="ChEBI" id="CHEBI:30013"/>
        <dbReference type="ChEBI" id="CHEBI:43474"/>
        <dbReference type="ChEBI" id="CHEBI:61977"/>
        <dbReference type="EC" id="3.1.3.16"/>
    </reaction>
</comment>
<comment type="subunit">
    <text evidence="1">Component of the cleavage and polyadenylation factor (CPF) complex.</text>
</comment>
<comment type="subcellular location">
    <subcellularLocation>
        <location evidence="1">Nucleus</location>
    </subcellularLocation>
</comment>
<comment type="similarity">
    <text evidence="2">Belongs to the SSU72 phosphatase family.</text>
</comment>
<dbReference type="EC" id="3.1.3.16"/>
<dbReference type="EMBL" id="CR382133">
    <property type="protein sequence ID" value="CAG84628.2"/>
    <property type="molecule type" value="Genomic_DNA"/>
</dbReference>
<dbReference type="RefSeq" id="XP_456672.2">
    <property type="nucleotide sequence ID" value="XM_456672.1"/>
</dbReference>
<dbReference type="SMR" id="Q6BYP7"/>
<dbReference type="FunCoup" id="Q6BYP7">
    <property type="interactions" value="1001"/>
</dbReference>
<dbReference type="STRING" id="284592.Q6BYP7"/>
<dbReference type="GeneID" id="2899647"/>
<dbReference type="KEGG" id="dha:DEHA2A07854g"/>
<dbReference type="VEuPathDB" id="FungiDB:DEHA2A07854g"/>
<dbReference type="eggNOG" id="KOG2424">
    <property type="taxonomic scope" value="Eukaryota"/>
</dbReference>
<dbReference type="HOGENOM" id="CLU_062463_0_1_1"/>
<dbReference type="InParanoid" id="Q6BYP7"/>
<dbReference type="OMA" id="PNCYEFG"/>
<dbReference type="OrthoDB" id="57957at2759"/>
<dbReference type="Proteomes" id="UP000000599">
    <property type="component" value="Chromosome A"/>
</dbReference>
<dbReference type="GO" id="GO:0000785">
    <property type="term" value="C:chromatin"/>
    <property type="evidence" value="ECO:0007669"/>
    <property type="project" value="EnsemblFungi"/>
</dbReference>
<dbReference type="GO" id="GO:0005847">
    <property type="term" value="C:mRNA cleavage and polyadenylation specificity factor complex"/>
    <property type="evidence" value="ECO:0007669"/>
    <property type="project" value="EnsemblFungi"/>
</dbReference>
<dbReference type="GO" id="GO:0004725">
    <property type="term" value="F:protein tyrosine phosphatase activity"/>
    <property type="evidence" value="ECO:0007669"/>
    <property type="project" value="EnsemblFungi"/>
</dbReference>
<dbReference type="GO" id="GO:0180007">
    <property type="term" value="F:RNA polymerase II CTD heptapeptide repeat S5 phosphatase activity"/>
    <property type="evidence" value="ECO:0007669"/>
    <property type="project" value="EnsemblFungi"/>
</dbReference>
<dbReference type="GO" id="GO:0030643">
    <property type="term" value="P:intracellular phosphate ion homeostasis"/>
    <property type="evidence" value="ECO:0007669"/>
    <property type="project" value="EnsemblFungi"/>
</dbReference>
<dbReference type="GO" id="GO:0031124">
    <property type="term" value="P:mRNA 3'-end processing"/>
    <property type="evidence" value="ECO:0007669"/>
    <property type="project" value="EnsemblFungi"/>
</dbReference>
<dbReference type="GO" id="GO:0032215">
    <property type="term" value="P:positive regulation of telomere maintenance via semi-conservative replication"/>
    <property type="evidence" value="ECO:0007669"/>
    <property type="project" value="EnsemblFungi"/>
</dbReference>
<dbReference type="GO" id="GO:0090052">
    <property type="term" value="P:regulation of pericentric heterochromatin formation"/>
    <property type="evidence" value="ECO:0007669"/>
    <property type="project" value="EnsemblFungi"/>
</dbReference>
<dbReference type="GO" id="GO:1902801">
    <property type="term" value="P:regulation of siRNA-independent facultative heterochromatin formation"/>
    <property type="evidence" value="ECO:0007669"/>
    <property type="project" value="EnsemblFungi"/>
</dbReference>
<dbReference type="GO" id="GO:0009302">
    <property type="term" value="P:sno(s)RNA transcription"/>
    <property type="evidence" value="ECO:0007669"/>
    <property type="project" value="EnsemblFungi"/>
</dbReference>
<dbReference type="GO" id="GO:0030847">
    <property type="term" value="P:termination of RNA polymerase II transcription, exosome-dependent"/>
    <property type="evidence" value="ECO:0007669"/>
    <property type="project" value="EnsemblFungi"/>
</dbReference>
<dbReference type="GO" id="GO:0030846">
    <property type="term" value="P:termination of RNA polymerase II transcription, poly(A)-coupled"/>
    <property type="evidence" value="ECO:0007669"/>
    <property type="project" value="EnsemblFungi"/>
</dbReference>
<dbReference type="GO" id="GO:0031564">
    <property type="term" value="P:transcription antitermination"/>
    <property type="evidence" value="ECO:0007669"/>
    <property type="project" value="EnsemblFungi"/>
</dbReference>
<dbReference type="GO" id="GO:0006368">
    <property type="term" value="P:transcription elongation by RNA polymerase II"/>
    <property type="evidence" value="ECO:0007669"/>
    <property type="project" value="EnsemblFungi"/>
</dbReference>
<dbReference type="GO" id="GO:0001174">
    <property type="term" value="P:transcriptional start site selection at RNA polymerase II promoter"/>
    <property type="evidence" value="ECO:0007669"/>
    <property type="project" value="EnsemblFungi"/>
</dbReference>
<dbReference type="FunFam" id="3.40.50.2300:FF:000039">
    <property type="entry name" value="RNA polymerase II subunit A C-terminal domain phosphatase"/>
    <property type="match status" value="1"/>
</dbReference>
<dbReference type="Gene3D" id="3.40.50.2300">
    <property type="match status" value="2"/>
</dbReference>
<dbReference type="InterPro" id="IPR006811">
    <property type="entry name" value="RNA_pol_II_suA"/>
</dbReference>
<dbReference type="PANTHER" id="PTHR20383">
    <property type="entry name" value="RNA POLYMERASE II SUBUNIT A C-TERMINAL DOMAIN PHOSPHATASE"/>
    <property type="match status" value="1"/>
</dbReference>
<dbReference type="Pfam" id="PF04722">
    <property type="entry name" value="Ssu72"/>
    <property type="match status" value="1"/>
</dbReference>
<name>SSU72_DEBHA</name>
<protein>
    <recommendedName>
        <fullName>RNA polymerase II subunit A C-terminal domain phosphatase SSU72</fullName>
        <shortName>CTD phosphatase SSU72</shortName>
        <ecNumber>3.1.3.16</ecNumber>
    </recommendedName>
    <alternativeName>
        <fullName>Suppressor of SUA7 protein 2 homolog</fullName>
    </alternativeName>
</protein>
<reference key="1">
    <citation type="journal article" date="2004" name="Nature">
        <title>Genome evolution in yeasts.</title>
        <authorList>
            <person name="Dujon B."/>
            <person name="Sherman D."/>
            <person name="Fischer G."/>
            <person name="Durrens P."/>
            <person name="Casaregola S."/>
            <person name="Lafontaine I."/>
            <person name="de Montigny J."/>
            <person name="Marck C."/>
            <person name="Neuveglise C."/>
            <person name="Talla E."/>
            <person name="Goffard N."/>
            <person name="Frangeul L."/>
            <person name="Aigle M."/>
            <person name="Anthouard V."/>
            <person name="Babour A."/>
            <person name="Barbe V."/>
            <person name="Barnay S."/>
            <person name="Blanchin S."/>
            <person name="Beckerich J.-M."/>
            <person name="Beyne E."/>
            <person name="Bleykasten C."/>
            <person name="Boisrame A."/>
            <person name="Boyer J."/>
            <person name="Cattolico L."/>
            <person name="Confanioleri F."/>
            <person name="de Daruvar A."/>
            <person name="Despons L."/>
            <person name="Fabre E."/>
            <person name="Fairhead C."/>
            <person name="Ferry-Dumazet H."/>
            <person name="Groppi A."/>
            <person name="Hantraye F."/>
            <person name="Hennequin C."/>
            <person name="Jauniaux N."/>
            <person name="Joyet P."/>
            <person name="Kachouri R."/>
            <person name="Kerrest A."/>
            <person name="Koszul R."/>
            <person name="Lemaire M."/>
            <person name="Lesur I."/>
            <person name="Ma L."/>
            <person name="Muller H."/>
            <person name="Nicaud J.-M."/>
            <person name="Nikolski M."/>
            <person name="Oztas S."/>
            <person name="Ozier-Kalogeropoulos O."/>
            <person name="Pellenz S."/>
            <person name="Potier S."/>
            <person name="Richard G.-F."/>
            <person name="Straub M.-L."/>
            <person name="Suleau A."/>
            <person name="Swennen D."/>
            <person name="Tekaia F."/>
            <person name="Wesolowski-Louvel M."/>
            <person name="Westhof E."/>
            <person name="Wirth B."/>
            <person name="Zeniou-Meyer M."/>
            <person name="Zivanovic Y."/>
            <person name="Bolotin-Fukuhara M."/>
            <person name="Thierry A."/>
            <person name="Bouchier C."/>
            <person name="Caudron B."/>
            <person name="Scarpelli C."/>
            <person name="Gaillardin C."/>
            <person name="Weissenbach J."/>
            <person name="Wincker P."/>
            <person name="Souciet J.-L."/>
        </authorList>
    </citation>
    <scope>NUCLEOTIDE SEQUENCE [LARGE SCALE GENOMIC DNA]</scope>
    <source>
        <strain>ATCC 36239 / CBS 767 / BCRC 21394 / JCM 1990 / NBRC 0083 / IGC 2968</strain>
    </source>
</reference>
<proteinExistence type="inferred from homology"/>
<gene>
    <name type="primary">SSU72</name>
    <name type="ordered locus">DEHA2A07854g</name>
</gene>
<feature type="chain" id="PRO_0000255608" description="RNA polymerase II subunit A C-terminal domain phosphatase SSU72">
    <location>
        <begin position="1"/>
        <end position="223"/>
    </location>
</feature>
<evidence type="ECO:0000250" key="1"/>
<evidence type="ECO:0000305" key="2"/>
<accession>Q6BYP7</accession>
<sequence>MVSDSLKICTVCAANNNRSMESHKQLKDAGYNVRSFGTGSAVRLPGPSVDKPNVYEFGTPYDDIYRDLTSQEYHKMYESNGLIRMINRNRHIKRAPEKWHNNASAGKFDLVITCEERCFDLVLDDLMVRLVNKDQADTEIKQAVHIINIDIKDDYENAVIGGKGILKLVNMIHEFRNTNKQRRLDHDFDDESDTILEDQMMKLLAKWQQEHTHLPTLYSVAYY</sequence>
<organism>
    <name type="scientific">Debaryomyces hansenii (strain ATCC 36239 / CBS 767 / BCRC 21394 / JCM 1990 / NBRC 0083 / IGC 2968)</name>
    <name type="common">Yeast</name>
    <name type="synonym">Torulaspora hansenii</name>
    <dbReference type="NCBI Taxonomy" id="284592"/>
    <lineage>
        <taxon>Eukaryota</taxon>
        <taxon>Fungi</taxon>
        <taxon>Dikarya</taxon>
        <taxon>Ascomycota</taxon>
        <taxon>Saccharomycotina</taxon>
        <taxon>Pichiomycetes</taxon>
        <taxon>Debaryomycetaceae</taxon>
        <taxon>Debaryomyces</taxon>
    </lineage>
</organism>